<proteinExistence type="inferred from homology"/>
<reference key="1">
    <citation type="journal article" date="2005" name="Proc. Natl. Acad. Sci. U.S.A.">
        <title>The genome of the heartwater agent Ehrlichia ruminantium contains multiple tandem repeats of actively variable copy number.</title>
        <authorList>
            <person name="Collins N.E."/>
            <person name="Liebenberg J."/>
            <person name="de Villiers E.P."/>
            <person name="Brayton K.A."/>
            <person name="Louw E."/>
            <person name="Pretorius A."/>
            <person name="Faber F.E."/>
            <person name="van Heerden H."/>
            <person name="Josemans A."/>
            <person name="van Kleef M."/>
            <person name="Steyn H.C."/>
            <person name="van Strijp M.F."/>
            <person name="Zweygarth E."/>
            <person name="Jongejan F."/>
            <person name="Maillard J.C."/>
            <person name="Berthier D."/>
            <person name="Botha M."/>
            <person name="Joubert F."/>
            <person name="Corton C.H."/>
            <person name="Thomson N.R."/>
            <person name="Allsopp M.T."/>
            <person name="Allsopp B.A."/>
        </authorList>
    </citation>
    <scope>NUCLEOTIDE SEQUENCE [LARGE SCALE GENOMIC DNA]</scope>
    <source>
        <strain>Welgevonden</strain>
    </source>
</reference>
<reference key="2">
    <citation type="journal article" date="2006" name="J. Bacteriol.">
        <title>Comparative genomic analysis of three strains of Ehrlichia ruminantium reveals an active process of genome size plasticity.</title>
        <authorList>
            <person name="Frutos R."/>
            <person name="Viari A."/>
            <person name="Ferraz C."/>
            <person name="Morgat A."/>
            <person name="Eychenie S."/>
            <person name="Kandassamy Y."/>
            <person name="Chantal I."/>
            <person name="Bensaid A."/>
            <person name="Coissac E."/>
            <person name="Vachiery N."/>
            <person name="Demaille J."/>
            <person name="Martinez D."/>
        </authorList>
    </citation>
    <scope>NUCLEOTIDE SEQUENCE [LARGE SCALE GENOMIC DNA]</scope>
    <source>
        <strain>Welgevonden</strain>
    </source>
</reference>
<evidence type="ECO:0000255" key="1">
    <source>
        <dbReference type="HAMAP-Rule" id="MF_00014"/>
    </source>
</evidence>
<protein>
    <recommendedName>
        <fullName evidence="1">Ribosome maturation factor RimM</fullName>
    </recommendedName>
</protein>
<sequence length="172" mass="19513">MNSDFICLGIITSPHGIKGHVKIKTFTENPQNFTSYGKLTDGITTYEINIIQVVSKNTIIAKINNITSRTNAELLRNKKLFIEKTKLPNLIENEFYHSDLVGLQVILEDNNIFGTIKKIYNFGSCDIIEILLYNSKKSTMLPFSKDIFTHINTKERYVILKLPEIIGSNSGI</sequence>
<gene>
    <name evidence="1" type="primary">rimM</name>
    <name type="ordered locus">Erum8850</name>
    <name type="ordered locus">ERWE_CDS_09360</name>
</gene>
<name>RIMM_EHRRW</name>
<feature type="chain" id="PRO_0000244130" description="Ribosome maturation factor RimM">
    <location>
        <begin position="1"/>
        <end position="172"/>
    </location>
</feature>
<feature type="domain" description="PRC barrel" evidence="1">
    <location>
        <begin position="92"/>
        <end position="167"/>
    </location>
</feature>
<comment type="function">
    <text evidence="1">An accessory protein needed during the final step in the assembly of 30S ribosomal subunit, possibly for assembly of the head region. Essential for efficient processing of 16S rRNA. May be needed both before and after RbfA during the maturation of 16S rRNA. It has affinity for free ribosomal 30S subunits but not for 70S ribosomes.</text>
</comment>
<comment type="subunit">
    <text evidence="1">Binds ribosomal protein uS19.</text>
</comment>
<comment type="subcellular location">
    <subcellularLocation>
        <location evidence="1">Cytoplasm</location>
    </subcellularLocation>
</comment>
<comment type="domain">
    <text evidence="1">The PRC barrel domain binds ribosomal protein uS19.</text>
</comment>
<comment type="similarity">
    <text evidence="1">Belongs to the RimM family.</text>
</comment>
<keyword id="KW-0143">Chaperone</keyword>
<keyword id="KW-0963">Cytoplasm</keyword>
<keyword id="KW-0690">Ribosome biogenesis</keyword>
<keyword id="KW-0698">rRNA processing</keyword>
<organism>
    <name type="scientific">Ehrlichia ruminantium (strain Welgevonden)</name>
    <dbReference type="NCBI Taxonomy" id="254945"/>
    <lineage>
        <taxon>Bacteria</taxon>
        <taxon>Pseudomonadati</taxon>
        <taxon>Pseudomonadota</taxon>
        <taxon>Alphaproteobacteria</taxon>
        <taxon>Rickettsiales</taxon>
        <taxon>Anaplasmataceae</taxon>
        <taxon>Ehrlichia</taxon>
    </lineage>
</organism>
<dbReference type="EMBL" id="CR767821">
    <property type="protein sequence ID" value="CAH58620.1"/>
    <property type="molecule type" value="Genomic_DNA"/>
</dbReference>
<dbReference type="EMBL" id="CR925678">
    <property type="protein sequence ID" value="CAI27430.1"/>
    <property type="molecule type" value="Genomic_DNA"/>
</dbReference>
<dbReference type="RefSeq" id="WP_011155563.1">
    <property type="nucleotide sequence ID" value="NC_005295.2"/>
</dbReference>
<dbReference type="SMR" id="Q5H9Z8"/>
<dbReference type="GeneID" id="33058037"/>
<dbReference type="KEGG" id="eru:Erum8850"/>
<dbReference type="KEGG" id="erw:ERWE_CDS_09360"/>
<dbReference type="eggNOG" id="COG0806">
    <property type="taxonomic scope" value="Bacteria"/>
</dbReference>
<dbReference type="HOGENOM" id="CLU_077636_0_1_5"/>
<dbReference type="Proteomes" id="UP000001021">
    <property type="component" value="Chromosome"/>
</dbReference>
<dbReference type="GO" id="GO:0005737">
    <property type="term" value="C:cytoplasm"/>
    <property type="evidence" value="ECO:0007669"/>
    <property type="project" value="UniProtKB-SubCell"/>
</dbReference>
<dbReference type="GO" id="GO:0005840">
    <property type="term" value="C:ribosome"/>
    <property type="evidence" value="ECO:0007669"/>
    <property type="project" value="InterPro"/>
</dbReference>
<dbReference type="GO" id="GO:0043022">
    <property type="term" value="F:ribosome binding"/>
    <property type="evidence" value="ECO:0007669"/>
    <property type="project" value="InterPro"/>
</dbReference>
<dbReference type="GO" id="GO:0042274">
    <property type="term" value="P:ribosomal small subunit biogenesis"/>
    <property type="evidence" value="ECO:0007669"/>
    <property type="project" value="UniProtKB-UniRule"/>
</dbReference>
<dbReference type="GO" id="GO:0006364">
    <property type="term" value="P:rRNA processing"/>
    <property type="evidence" value="ECO:0007669"/>
    <property type="project" value="UniProtKB-UniRule"/>
</dbReference>
<dbReference type="Gene3D" id="2.30.30.240">
    <property type="entry name" value="PRC-barrel domain"/>
    <property type="match status" value="1"/>
</dbReference>
<dbReference type="Gene3D" id="2.40.30.60">
    <property type="entry name" value="RimM"/>
    <property type="match status" value="1"/>
</dbReference>
<dbReference type="HAMAP" id="MF_00014">
    <property type="entry name" value="Ribosome_mat_RimM"/>
    <property type="match status" value="1"/>
</dbReference>
<dbReference type="InterPro" id="IPR011033">
    <property type="entry name" value="PRC_barrel-like_sf"/>
</dbReference>
<dbReference type="InterPro" id="IPR056792">
    <property type="entry name" value="PRC_RimM"/>
</dbReference>
<dbReference type="InterPro" id="IPR011961">
    <property type="entry name" value="RimM"/>
</dbReference>
<dbReference type="InterPro" id="IPR002676">
    <property type="entry name" value="RimM_N"/>
</dbReference>
<dbReference type="InterPro" id="IPR036976">
    <property type="entry name" value="RimM_N_sf"/>
</dbReference>
<dbReference type="InterPro" id="IPR009000">
    <property type="entry name" value="Transl_B-barrel_sf"/>
</dbReference>
<dbReference type="NCBIfam" id="TIGR02273">
    <property type="entry name" value="16S_RimM"/>
    <property type="match status" value="1"/>
</dbReference>
<dbReference type="NCBIfam" id="NF011186">
    <property type="entry name" value="PRK14592.1"/>
    <property type="match status" value="1"/>
</dbReference>
<dbReference type="PANTHER" id="PTHR33692">
    <property type="entry name" value="RIBOSOME MATURATION FACTOR RIMM"/>
    <property type="match status" value="1"/>
</dbReference>
<dbReference type="PANTHER" id="PTHR33692:SF1">
    <property type="entry name" value="RIBOSOME MATURATION FACTOR RIMM"/>
    <property type="match status" value="1"/>
</dbReference>
<dbReference type="Pfam" id="PF24986">
    <property type="entry name" value="PRC_RimM"/>
    <property type="match status" value="1"/>
</dbReference>
<dbReference type="Pfam" id="PF01782">
    <property type="entry name" value="RimM"/>
    <property type="match status" value="1"/>
</dbReference>
<dbReference type="SUPFAM" id="SSF50346">
    <property type="entry name" value="PRC-barrel domain"/>
    <property type="match status" value="1"/>
</dbReference>
<dbReference type="SUPFAM" id="SSF50447">
    <property type="entry name" value="Translation proteins"/>
    <property type="match status" value="1"/>
</dbReference>
<accession>Q5H9Z8</accession>
<accession>Q5FCC7</accession>